<keyword id="KW-0687">Ribonucleoprotein</keyword>
<keyword id="KW-0689">Ribosomal protein</keyword>
<gene>
    <name type="primary">RpL17</name>
</gene>
<feature type="chain" id="PRO_0000323404" description="Large ribosomal subunit protein uL22">
    <location>
        <begin position="1"/>
        <end position="186"/>
    </location>
</feature>
<feature type="region of interest" description="Disordered" evidence="1">
    <location>
        <begin position="159"/>
        <end position="186"/>
    </location>
</feature>
<feature type="compositionally biased region" description="Basic and acidic residues" evidence="1">
    <location>
        <begin position="177"/>
        <end position="186"/>
    </location>
</feature>
<dbReference type="EMBL" id="AY826144">
    <property type="protein sequence ID" value="AAV90716.1"/>
    <property type="molecule type" value="mRNA"/>
</dbReference>
<dbReference type="RefSeq" id="XP_019546021.1">
    <property type="nucleotide sequence ID" value="XM_019690476.1"/>
</dbReference>
<dbReference type="SMR" id="Q5MIR6"/>
<dbReference type="EnsemblMetazoa" id="AALF014051-RA">
    <property type="protein sequence ID" value="AALF014051-PA"/>
    <property type="gene ID" value="AALF014051"/>
</dbReference>
<dbReference type="GeneID" id="109424016"/>
<dbReference type="KEGG" id="aalb:109416411"/>
<dbReference type="KEGG" id="aalb:109424016"/>
<dbReference type="CTD" id="6139"/>
<dbReference type="VEuPathDB" id="VectorBase:AALC636_004176"/>
<dbReference type="VEuPathDB" id="VectorBase:AALC636_015704"/>
<dbReference type="VEuPathDB" id="VectorBase:AALF014051"/>
<dbReference type="VEuPathDB" id="VectorBase:AALFPA_044409"/>
<dbReference type="OrthoDB" id="10254664at2759"/>
<dbReference type="Proteomes" id="UP000069940">
    <property type="component" value="Unassembled WGS sequence"/>
</dbReference>
<dbReference type="GO" id="GO:0022625">
    <property type="term" value="C:cytosolic large ribosomal subunit"/>
    <property type="evidence" value="ECO:0007669"/>
    <property type="project" value="TreeGrafter"/>
</dbReference>
<dbReference type="GO" id="GO:0003735">
    <property type="term" value="F:structural constituent of ribosome"/>
    <property type="evidence" value="ECO:0007669"/>
    <property type="project" value="InterPro"/>
</dbReference>
<dbReference type="GO" id="GO:0002181">
    <property type="term" value="P:cytoplasmic translation"/>
    <property type="evidence" value="ECO:0007669"/>
    <property type="project" value="TreeGrafter"/>
</dbReference>
<dbReference type="CDD" id="cd00336">
    <property type="entry name" value="Ribosomal_L22"/>
    <property type="match status" value="1"/>
</dbReference>
<dbReference type="FunFam" id="3.90.470.10:FF:000003">
    <property type="entry name" value="60S ribosomal protein L17"/>
    <property type="match status" value="1"/>
</dbReference>
<dbReference type="Gene3D" id="3.90.470.10">
    <property type="entry name" value="Ribosomal protein L22/L17"/>
    <property type="match status" value="1"/>
</dbReference>
<dbReference type="InterPro" id="IPR001063">
    <property type="entry name" value="Ribosomal_uL22"/>
</dbReference>
<dbReference type="InterPro" id="IPR018260">
    <property type="entry name" value="Ribosomal_uL22_CS"/>
</dbReference>
<dbReference type="InterPro" id="IPR005721">
    <property type="entry name" value="Ribosomal_uL22_euk/arc"/>
</dbReference>
<dbReference type="InterPro" id="IPR036394">
    <property type="entry name" value="Ribosomal_uL22_sf"/>
</dbReference>
<dbReference type="NCBIfam" id="TIGR01038">
    <property type="entry name" value="uL22_arch_euk"/>
    <property type="match status" value="1"/>
</dbReference>
<dbReference type="PANTHER" id="PTHR11593">
    <property type="entry name" value="60S RIBOSOMAL PROTEIN L17"/>
    <property type="match status" value="1"/>
</dbReference>
<dbReference type="PANTHER" id="PTHR11593:SF10">
    <property type="entry name" value="60S RIBOSOMAL PROTEIN L17"/>
    <property type="match status" value="1"/>
</dbReference>
<dbReference type="Pfam" id="PF00237">
    <property type="entry name" value="Ribosomal_L22"/>
    <property type="match status" value="1"/>
</dbReference>
<dbReference type="SUPFAM" id="SSF54843">
    <property type="entry name" value="Ribosomal protein L22"/>
    <property type="match status" value="1"/>
</dbReference>
<dbReference type="PROSITE" id="PS00464">
    <property type="entry name" value="RIBOSOMAL_L22"/>
    <property type="match status" value="1"/>
</dbReference>
<proteinExistence type="evidence at transcript level"/>
<protein>
    <recommendedName>
        <fullName evidence="2">Large ribosomal subunit protein uL22</fullName>
    </recommendedName>
    <alternativeName>
        <fullName>60S ribosomal protein L17</fullName>
    </alternativeName>
</protein>
<accession>Q5MIR6</accession>
<sequence length="186" mass="21543">MGRYAKEPDNPAKSCKARGSNLRVHFKNTRETALAIKRMPLRRAQKFLKNVCEKKECVPFRRFNGGVGRCAQAKHWNTSVGRWPKKSAEFLLQLLKNAEANADYRGLDVDRLVVDHIQVNRAPCLRRRTYRAHGRINPYMSSPCHIELSLTEKEDVVSKAAENEPAKKKLSKKKLQRQKEKMMRNE</sequence>
<reference key="1">
    <citation type="journal article" date="2007" name="Insect Biochem. Mol. Biol.">
        <title>An insight into the sialome of the adult female mosquito Aedes albopictus.</title>
        <authorList>
            <person name="Arca B."/>
            <person name="Lombardo F."/>
            <person name="Francischetti I.M."/>
            <person name="Pham V.M."/>
            <person name="Mestres-Simon M."/>
            <person name="Andersen J.F."/>
            <person name="Ribeiro J.M."/>
        </authorList>
    </citation>
    <scope>NUCLEOTIDE SEQUENCE [MRNA]</scope>
    <source>
        <tissue>Salivary gland</tissue>
    </source>
</reference>
<organism>
    <name type="scientific">Aedes albopictus</name>
    <name type="common">Asian tiger mosquito</name>
    <name type="synonym">Stegomyia albopicta</name>
    <dbReference type="NCBI Taxonomy" id="7160"/>
    <lineage>
        <taxon>Eukaryota</taxon>
        <taxon>Metazoa</taxon>
        <taxon>Ecdysozoa</taxon>
        <taxon>Arthropoda</taxon>
        <taxon>Hexapoda</taxon>
        <taxon>Insecta</taxon>
        <taxon>Pterygota</taxon>
        <taxon>Neoptera</taxon>
        <taxon>Endopterygota</taxon>
        <taxon>Diptera</taxon>
        <taxon>Nematocera</taxon>
        <taxon>Culicoidea</taxon>
        <taxon>Culicidae</taxon>
        <taxon>Culicinae</taxon>
        <taxon>Aedini</taxon>
        <taxon>Aedes</taxon>
        <taxon>Stegomyia</taxon>
    </lineage>
</organism>
<name>RL17_AEDAL</name>
<comment type="similarity">
    <text evidence="2">Belongs to the universal ribosomal protein uL22 family.</text>
</comment>
<evidence type="ECO:0000256" key="1">
    <source>
        <dbReference type="SAM" id="MobiDB-lite"/>
    </source>
</evidence>
<evidence type="ECO:0000305" key="2"/>